<accession>Q62H17</accession>
<sequence>MSSMKIAIAGASGRMGRMLIEAVLAAPDATLAGALDRTGSSQLGQDAGAFLGKQTGVALTDDIERVCAEADYLIDFTRPEGTLAHLDAALRHDVKLVIGTTGFSEPQKAQLRAAGGKIALVFSANMSVGVNVTMKLLEFAAKQFAQGYDIEIIEAHHRHKVDAPSGTALMMGETIAAATGRTLDDCAVYGRHGVTGERDPSTIGFSAIRGGDIVGDHTVLFAGIGERIEITHKSASRVSYAQGALRAARFLAGHQAGFFDMQDVLGLR</sequence>
<reference key="1">
    <citation type="journal article" date="2004" name="Proc. Natl. Acad. Sci. U.S.A.">
        <title>Structural flexibility in the Burkholderia mallei genome.</title>
        <authorList>
            <person name="Nierman W.C."/>
            <person name="DeShazer D."/>
            <person name="Kim H.S."/>
            <person name="Tettelin H."/>
            <person name="Nelson K.E."/>
            <person name="Feldblyum T.V."/>
            <person name="Ulrich R.L."/>
            <person name="Ronning C.M."/>
            <person name="Brinkac L.M."/>
            <person name="Daugherty S.C."/>
            <person name="Davidsen T.D."/>
            <person name="DeBoy R.T."/>
            <person name="Dimitrov G."/>
            <person name="Dodson R.J."/>
            <person name="Durkin A.S."/>
            <person name="Gwinn M.L."/>
            <person name="Haft D.H."/>
            <person name="Khouri H.M."/>
            <person name="Kolonay J.F."/>
            <person name="Madupu R."/>
            <person name="Mohammoud Y."/>
            <person name="Nelson W.C."/>
            <person name="Radune D."/>
            <person name="Romero C.M."/>
            <person name="Sarria S."/>
            <person name="Selengut J."/>
            <person name="Shamblin C."/>
            <person name="Sullivan S.A."/>
            <person name="White O."/>
            <person name="Yu Y."/>
            <person name="Zafar N."/>
            <person name="Zhou L."/>
            <person name="Fraser C.M."/>
        </authorList>
    </citation>
    <scope>NUCLEOTIDE SEQUENCE [LARGE SCALE GENOMIC DNA]</scope>
    <source>
        <strain>ATCC 23344</strain>
    </source>
</reference>
<dbReference type="EC" id="1.17.1.8" evidence="1"/>
<dbReference type="EMBL" id="CP000010">
    <property type="protein sequence ID" value="AAU49702.1"/>
    <property type="molecule type" value="Genomic_DNA"/>
</dbReference>
<dbReference type="RefSeq" id="YP_104003.1">
    <property type="nucleotide sequence ID" value="NC_006348.1"/>
</dbReference>
<dbReference type="SMR" id="Q62H17"/>
<dbReference type="KEGG" id="bma:BMA2456"/>
<dbReference type="PATRIC" id="fig|243160.12.peg.2532"/>
<dbReference type="eggNOG" id="COG0289">
    <property type="taxonomic scope" value="Bacteria"/>
</dbReference>
<dbReference type="HOGENOM" id="CLU_047479_2_1_4"/>
<dbReference type="UniPathway" id="UPA00034">
    <property type="reaction ID" value="UER00018"/>
</dbReference>
<dbReference type="Proteomes" id="UP000006693">
    <property type="component" value="Chromosome 1"/>
</dbReference>
<dbReference type="GO" id="GO:0005829">
    <property type="term" value="C:cytosol"/>
    <property type="evidence" value="ECO:0007669"/>
    <property type="project" value="TreeGrafter"/>
</dbReference>
<dbReference type="GO" id="GO:0008839">
    <property type="term" value="F:4-hydroxy-tetrahydrodipicolinate reductase"/>
    <property type="evidence" value="ECO:0007669"/>
    <property type="project" value="UniProtKB-EC"/>
</dbReference>
<dbReference type="GO" id="GO:0051287">
    <property type="term" value="F:NAD binding"/>
    <property type="evidence" value="ECO:0007669"/>
    <property type="project" value="UniProtKB-UniRule"/>
</dbReference>
<dbReference type="GO" id="GO:0050661">
    <property type="term" value="F:NADP binding"/>
    <property type="evidence" value="ECO:0007669"/>
    <property type="project" value="UniProtKB-UniRule"/>
</dbReference>
<dbReference type="GO" id="GO:0016726">
    <property type="term" value="F:oxidoreductase activity, acting on CH or CH2 groups, NAD or NADP as acceptor"/>
    <property type="evidence" value="ECO:0007669"/>
    <property type="project" value="UniProtKB-UniRule"/>
</dbReference>
<dbReference type="GO" id="GO:0019877">
    <property type="term" value="P:diaminopimelate biosynthetic process"/>
    <property type="evidence" value="ECO:0007669"/>
    <property type="project" value="UniProtKB-UniRule"/>
</dbReference>
<dbReference type="GO" id="GO:0009089">
    <property type="term" value="P:lysine biosynthetic process via diaminopimelate"/>
    <property type="evidence" value="ECO:0007669"/>
    <property type="project" value="UniProtKB-UniRule"/>
</dbReference>
<dbReference type="CDD" id="cd02274">
    <property type="entry name" value="DHDPR_N"/>
    <property type="match status" value="1"/>
</dbReference>
<dbReference type="FunFam" id="3.30.360.10:FF:000004">
    <property type="entry name" value="4-hydroxy-tetrahydrodipicolinate reductase"/>
    <property type="match status" value="1"/>
</dbReference>
<dbReference type="FunFam" id="3.40.50.720:FF:000048">
    <property type="entry name" value="4-hydroxy-tetrahydrodipicolinate reductase"/>
    <property type="match status" value="1"/>
</dbReference>
<dbReference type="Gene3D" id="3.30.360.10">
    <property type="entry name" value="Dihydrodipicolinate Reductase, domain 2"/>
    <property type="match status" value="1"/>
</dbReference>
<dbReference type="Gene3D" id="3.40.50.720">
    <property type="entry name" value="NAD(P)-binding Rossmann-like Domain"/>
    <property type="match status" value="1"/>
</dbReference>
<dbReference type="HAMAP" id="MF_00102">
    <property type="entry name" value="DapB"/>
    <property type="match status" value="1"/>
</dbReference>
<dbReference type="InterPro" id="IPR022663">
    <property type="entry name" value="DapB_C"/>
</dbReference>
<dbReference type="InterPro" id="IPR000846">
    <property type="entry name" value="DapB_N"/>
</dbReference>
<dbReference type="InterPro" id="IPR022664">
    <property type="entry name" value="DapB_N_CS"/>
</dbReference>
<dbReference type="InterPro" id="IPR023940">
    <property type="entry name" value="DHDPR_bac"/>
</dbReference>
<dbReference type="InterPro" id="IPR036291">
    <property type="entry name" value="NAD(P)-bd_dom_sf"/>
</dbReference>
<dbReference type="NCBIfam" id="TIGR00036">
    <property type="entry name" value="dapB"/>
    <property type="match status" value="1"/>
</dbReference>
<dbReference type="PANTHER" id="PTHR20836:SF0">
    <property type="entry name" value="4-HYDROXY-TETRAHYDRODIPICOLINATE REDUCTASE 1, CHLOROPLASTIC-RELATED"/>
    <property type="match status" value="1"/>
</dbReference>
<dbReference type="PANTHER" id="PTHR20836">
    <property type="entry name" value="DIHYDRODIPICOLINATE REDUCTASE"/>
    <property type="match status" value="1"/>
</dbReference>
<dbReference type="Pfam" id="PF05173">
    <property type="entry name" value="DapB_C"/>
    <property type="match status" value="1"/>
</dbReference>
<dbReference type="Pfam" id="PF01113">
    <property type="entry name" value="DapB_N"/>
    <property type="match status" value="1"/>
</dbReference>
<dbReference type="PIRSF" id="PIRSF000161">
    <property type="entry name" value="DHPR"/>
    <property type="match status" value="1"/>
</dbReference>
<dbReference type="SUPFAM" id="SSF55347">
    <property type="entry name" value="Glyceraldehyde-3-phosphate dehydrogenase-like, C-terminal domain"/>
    <property type="match status" value="1"/>
</dbReference>
<dbReference type="SUPFAM" id="SSF51735">
    <property type="entry name" value="NAD(P)-binding Rossmann-fold domains"/>
    <property type="match status" value="1"/>
</dbReference>
<dbReference type="PROSITE" id="PS01298">
    <property type="entry name" value="DAPB"/>
    <property type="match status" value="1"/>
</dbReference>
<name>DAPB_BURMA</name>
<gene>
    <name evidence="1" type="primary">dapB</name>
    <name type="ordered locus">BMA2456</name>
</gene>
<protein>
    <recommendedName>
        <fullName evidence="1">4-hydroxy-tetrahydrodipicolinate reductase</fullName>
        <shortName evidence="1">HTPA reductase</shortName>
        <ecNumber evidence="1">1.17.1.8</ecNumber>
    </recommendedName>
</protein>
<organism>
    <name type="scientific">Burkholderia mallei (strain ATCC 23344)</name>
    <dbReference type="NCBI Taxonomy" id="243160"/>
    <lineage>
        <taxon>Bacteria</taxon>
        <taxon>Pseudomonadati</taxon>
        <taxon>Pseudomonadota</taxon>
        <taxon>Betaproteobacteria</taxon>
        <taxon>Burkholderiales</taxon>
        <taxon>Burkholderiaceae</taxon>
        <taxon>Burkholderia</taxon>
        <taxon>pseudomallei group</taxon>
    </lineage>
</organism>
<evidence type="ECO:0000255" key="1">
    <source>
        <dbReference type="HAMAP-Rule" id="MF_00102"/>
    </source>
</evidence>
<evidence type="ECO:0000305" key="2"/>
<feature type="chain" id="PRO_0000228332" description="4-hydroxy-tetrahydrodipicolinate reductase">
    <location>
        <begin position="1"/>
        <end position="268"/>
    </location>
</feature>
<feature type="active site" description="Proton donor/acceptor" evidence="1">
    <location>
        <position position="156"/>
    </location>
</feature>
<feature type="active site" description="Proton donor" evidence="1">
    <location>
        <position position="160"/>
    </location>
</feature>
<feature type="binding site" evidence="1">
    <location>
        <begin position="10"/>
        <end position="15"/>
    </location>
    <ligand>
        <name>NAD(+)</name>
        <dbReference type="ChEBI" id="CHEBI:57540"/>
    </ligand>
</feature>
<feature type="binding site" evidence="1">
    <location>
        <position position="36"/>
    </location>
    <ligand>
        <name>NAD(+)</name>
        <dbReference type="ChEBI" id="CHEBI:57540"/>
    </ligand>
</feature>
<feature type="binding site" evidence="1">
    <location>
        <position position="37"/>
    </location>
    <ligand>
        <name>NADP(+)</name>
        <dbReference type="ChEBI" id="CHEBI:58349"/>
    </ligand>
</feature>
<feature type="binding site" evidence="1">
    <location>
        <begin position="99"/>
        <end position="101"/>
    </location>
    <ligand>
        <name>NAD(+)</name>
        <dbReference type="ChEBI" id="CHEBI:57540"/>
    </ligand>
</feature>
<feature type="binding site" evidence="1">
    <location>
        <begin position="123"/>
        <end position="126"/>
    </location>
    <ligand>
        <name>NAD(+)</name>
        <dbReference type="ChEBI" id="CHEBI:57540"/>
    </ligand>
</feature>
<feature type="binding site" evidence="1">
    <location>
        <position position="157"/>
    </location>
    <ligand>
        <name>(S)-2,3,4,5-tetrahydrodipicolinate</name>
        <dbReference type="ChEBI" id="CHEBI:16845"/>
    </ligand>
</feature>
<feature type="binding site" evidence="1">
    <location>
        <begin position="166"/>
        <end position="167"/>
    </location>
    <ligand>
        <name>(S)-2,3,4,5-tetrahydrodipicolinate</name>
        <dbReference type="ChEBI" id="CHEBI:16845"/>
    </ligand>
</feature>
<comment type="function">
    <text evidence="1">Catalyzes the conversion of 4-hydroxy-tetrahydrodipicolinate (HTPA) to tetrahydrodipicolinate.</text>
</comment>
<comment type="catalytic activity">
    <reaction evidence="1">
        <text>(S)-2,3,4,5-tetrahydrodipicolinate + NAD(+) + H2O = (2S,4S)-4-hydroxy-2,3,4,5-tetrahydrodipicolinate + NADH + H(+)</text>
        <dbReference type="Rhea" id="RHEA:35323"/>
        <dbReference type="ChEBI" id="CHEBI:15377"/>
        <dbReference type="ChEBI" id="CHEBI:15378"/>
        <dbReference type="ChEBI" id="CHEBI:16845"/>
        <dbReference type="ChEBI" id="CHEBI:57540"/>
        <dbReference type="ChEBI" id="CHEBI:57945"/>
        <dbReference type="ChEBI" id="CHEBI:67139"/>
        <dbReference type="EC" id="1.17.1.8"/>
    </reaction>
</comment>
<comment type="catalytic activity">
    <reaction evidence="1">
        <text>(S)-2,3,4,5-tetrahydrodipicolinate + NADP(+) + H2O = (2S,4S)-4-hydroxy-2,3,4,5-tetrahydrodipicolinate + NADPH + H(+)</text>
        <dbReference type="Rhea" id="RHEA:35331"/>
        <dbReference type="ChEBI" id="CHEBI:15377"/>
        <dbReference type="ChEBI" id="CHEBI:15378"/>
        <dbReference type="ChEBI" id="CHEBI:16845"/>
        <dbReference type="ChEBI" id="CHEBI:57783"/>
        <dbReference type="ChEBI" id="CHEBI:58349"/>
        <dbReference type="ChEBI" id="CHEBI:67139"/>
        <dbReference type="EC" id="1.17.1.8"/>
    </reaction>
</comment>
<comment type="pathway">
    <text evidence="1">Amino-acid biosynthesis; L-lysine biosynthesis via DAP pathway; (S)-tetrahydrodipicolinate from L-aspartate: step 4/4.</text>
</comment>
<comment type="subcellular location">
    <subcellularLocation>
        <location evidence="1">Cytoplasm</location>
    </subcellularLocation>
</comment>
<comment type="similarity">
    <text evidence="1">Belongs to the DapB family.</text>
</comment>
<comment type="caution">
    <text evidence="2">Was originally thought to be a dihydrodipicolinate reductase (DHDPR), catalyzing the conversion of dihydrodipicolinate to tetrahydrodipicolinate. However, it was shown in E.coli that the substrate of the enzymatic reaction is not dihydrodipicolinate (DHDP) but in fact (2S,4S)-4-hydroxy-2,3,4,5-tetrahydrodipicolinic acid (HTPA), the product released by the DapA-catalyzed reaction.</text>
</comment>
<proteinExistence type="inferred from homology"/>
<keyword id="KW-0028">Amino-acid biosynthesis</keyword>
<keyword id="KW-0963">Cytoplasm</keyword>
<keyword id="KW-0220">Diaminopimelate biosynthesis</keyword>
<keyword id="KW-0457">Lysine biosynthesis</keyword>
<keyword id="KW-0520">NAD</keyword>
<keyword id="KW-0521">NADP</keyword>
<keyword id="KW-0560">Oxidoreductase</keyword>
<keyword id="KW-1185">Reference proteome</keyword>